<organism>
    <name type="scientific">Oryza sativa subsp. japonica</name>
    <name type="common">Rice</name>
    <dbReference type="NCBI Taxonomy" id="39947"/>
    <lineage>
        <taxon>Eukaryota</taxon>
        <taxon>Viridiplantae</taxon>
        <taxon>Streptophyta</taxon>
        <taxon>Embryophyta</taxon>
        <taxon>Tracheophyta</taxon>
        <taxon>Spermatophyta</taxon>
        <taxon>Magnoliopsida</taxon>
        <taxon>Liliopsida</taxon>
        <taxon>Poales</taxon>
        <taxon>Poaceae</taxon>
        <taxon>BOP clade</taxon>
        <taxon>Oryzoideae</taxon>
        <taxon>Oryzeae</taxon>
        <taxon>Oryzinae</taxon>
        <taxon>Oryza</taxon>
        <taxon>Oryza sativa</taxon>
    </lineage>
</organism>
<evidence type="ECO:0000255" key="1">
    <source>
        <dbReference type="PROSITE-ProRule" id="PRU00388"/>
    </source>
</evidence>
<evidence type="ECO:0000255" key="2">
    <source>
        <dbReference type="PROSITE-ProRule" id="PRU10133"/>
    </source>
</evidence>
<evidence type="ECO:0000269" key="3">
    <source>
    </source>
</evidence>
<accession>Q8S919</accession>
<accession>A0A0P0VHC2</accession>
<proteinExistence type="evidence at transcript level"/>
<gene>
    <name type="primary">UBC5B</name>
    <name type="ordered locus">Os02g0261100</name>
    <name type="ordered locus">LOC_Os02g16040</name>
    <name type="ORF">OsJ_06152</name>
    <name type="ORF">OSJNBb0026F09.5</name>
</gene>
<feature type="chain" id="PRO_0000397685" description="Ubiquitin-conjugating enzyme E2 5B">
    <location>
        <begin position="1"/>
        <end position="148"/>
    </location>
</feature>
<feature type="domain" description="UBC core" evidence="1">
    <location>
        <begin position="1"/>
        <end position="147"/>
    </location>
</feature>
<feature type="active site" description="Glycyl thioester intermediate" evidence="1 2">
    <location>
        <position position="85"/>
    </location>
</feature>
<keyword id="KW-0067">ATP-binding</keyword>
<keyword id="KW-0547">Nucleotide-binding</keyword>
<keyword id="KW-1185">Reference proteome</keyword>
<keyword id="KW-0808">Transferase</keyword>
<keyword id="KW-0833">Ubl conjugation pathway</keyword>
<dbReference type="EC" id="2.3.2.23"/>
<dbReference type="EMBL" id="AB074412">
    <property type="protein sequence ID" value="BAB89355.1"/>
    <property type="molecule type" value="mRNA"/>
</dbReference>
<dbReference type="EMBL" id="AP005777">
    <property type="protein sequence ID" value="BAD20047.1"/>
    <property type="molecule type" value="Genomic_DNA"/>
</dbReference>
<dbReference type="EMBL" id="AP008208">
    <property type="protein sequence ID" value="BAF08400.1"/>
    <property type="molecule type" value="Genomic_DNA"/>
</dbReference>
<dbReference type="EMBL" id="AP014958">
    <property type="protein sequence ID" value="BAS77989.1"/>
    <property type="molecule type" value="Genomic_DNA"/>
</dbReference>
<dbReference type="EMBL" id="CM000139">
    <property type="protein sequence ID" value="EAZ22486.1"/>
    <property type="molecule type" value="Genomic_DNA"/>
</dbReference>
<dbReference type="EMBL" id="AK121248">
    <property type="protein sequence ID" value="BAH00395.1"/>
    <property type="molecule type" value="mRNA"/>
</dbReference>
<dbReference type="RefSeq" id="XP_015627363.1">
    <property type="nucleotide sequence ID" value="XM_015771877.1"/>
</dbReference>
<dbReference type="SMR" id="Q8S919"/>
<dbReference type="BioGRID" id="797977">
    <property type="interactions" value="1"/>
</dbReference>
<dbReference type="FunCoup" id="Q8S919">
    <property type="interactions" value="2615"/>
</dbReference>
<dbReference type="STRING" id="39947.Q8S919"/>
<dbReference type="PaxDb" id="39947-Q8S919"/>
<dbReference type="EnsemblPlants" id="Os02t0261100-01">
    <property type="protein sequence ID" value="Os02t0261100-01"/>
    <property type="gene ID" value="Os02g0261100"/>
</dbReference>
<dbReference type="Gramene" id="Os02t0261100-01">
    <property type="protein sequence ID" value="Os02t0261100-01"/>
    <property type="gene ID" value="Os02g0261100"/>
</dbReference>
<dbReference type="KEGG" id="dosa:Os02g0261100"/>
<dbReference type="eggNOG" id="KOG0417">
    <property type="taxonomic scope" value="Eukaryota"/>
</dbReference>
<dbReference type="HOGENOM" id="CLU_030988_13_3_1"/>
<dbReference type="InParanoid" id="Q8S919"/>
<dbReference type="OMA" id="VHFTTRI"/>
<dbReference type="OrthoDB" id="581474at2759"/>
<dbReference type="PlantReactome" id="R-OSA-5654828">
    <property type="pathway name" value="Strigolactone signaling"/>
</dbReference>
<dbReference type="UniPathway" id="UPA00143"/>
<dbReference type="Proteomes" id="UP000000763">
    <property type="component" value="Chromosome 2"/>
</dbReference>
<dbReference type="Proteomes" id="UP000007752">
    <property type="component" value="Chromosome 2"/>
</dbReference>
<dbReference type="Proteomes" id="UP000059680">
    <property type="component" value="Chromosome 2"/>
</dbReference>
<dbReference type="GO" id="GO:0005634">
    <property type="term" value="C:nucleus"/>
    <property type="evidence" value="ECO:0000318"/>
    <property type="project" value="GO_Central"/>
</dbReference>
<dbReference type="GO" id="GO:0005524">
    <property type="term" value="F:ATP binding"/>
    <property type="evidence" value="ECO:0007669"/>
    <property type="project" value="UniProtKB-KW"/>
</dbReference>
<dbReference type="GO" id="GO:0061631">
    <property type="term" value="F:ubiquitin conjugating enzyme activity"/>
    <property type="evidence" value="ECO:0007669"/>
    <property type="project" value="UniProtKB-EC"/>
</dbReference>
<dbReference type="GO" id="GO:0004842">
    <property type="term" value="F:ubiquitin-protein transferase activity"/>
    <property type="evidence" value="ECO:0000314"/>
    <property type="project" value="UniProtKB"/>
</dbReference>
<dbReference type="GO" id="GO:0000209">
    <property type="term" value="P:protein polyubiquitination"/>
    <property type="evidence" value="ECO:0000318"/>
    <property type="project" value="GO_Central"/>
</dbReference>
<dbReference type="GO" id="GO:0016567">
    <property type="term" value="P:protein ubiquitination"/>
    <property type="evidence" value="ECO:0000314"/>
    <property type="project" value="UniProtKB"/>
</dbReference>
<dbReference type="GO" id="GO:0006511">
    <property type="term" value="P:ubiquitin-dependent protein catabolic process"/>
    <property type="evidence" value="ECO:0000318"/>
    <property type="project" value="GO_Central"/>
</dbReference>
<dbReference type="CDD" id="cd23792">
    <property type="entry name" value="UBCc_UBE2D"/>
    <property type="match status" value="1"/>
</dbReference>
<dbReference type="FunFam" id="3.10.110.10:FF:000001">
    <property type="entry name" value="Ubiquitin-conjugating enzyme 28, E2"/>
    <property type="match status" value="1"/>
</dbReference>
<dbReference type="Gene3D" id="3.10.110.10">
    <property type="entry name" value="Ubiquitin Conjugating Enzyme"/>
    <property type="match status" value="1"/>
</dbReference>
<dbReference type="InterPro" id="IPR000608">
    <property type="entry name" value="UBQ-conjugat_E2_core"/>
</dbReference>
<dbReference type="InterPro" id="IPR023313">
    <property type="entry name" value="UBQ-conjugating_AS"/>
</dbReference>
<dbReference type="InterPro" id="IPR016135">
    <property type="entry name" value="UBQ-conjugating_enzyme/RWD"/>
</dbReference>
<dbReference type="PANTHER" id="PTHR24068">
    <property type="entry name" value="UBIQUITIN-CONJUGATING ENZYME E2"/>
    <property type="match status" value="1"/>
</dbReference>
<dbReference type="Pfam" id="PF00179">
    <property type="entry name" value="UQ_con"/>
    <property type="match status" value="1"/>
</dbReference>
<dbReference type="SMART" id="SM00212">
    <property type="entry name" value="UBCc"/>
    <property type="match status" value="1"/>
</dbReference>
<dbReference type="SUPFAM" id="SSF54495">
    <property type="entry name" value="UBC-like"/>
    <property type="match status" value="1"/>
</dbReference>
<dbReference type="PROSITE" id="PS00183">
    <property type="entry name" value="UBC_1"/>
    <property type="match status" value="1"/>
</dbReference>
<dbReference type="PROSITE" id="PS50127">
    <property type="entry name" value="UBC_2"/>
    <property type="match status" value="1"/>
</dbReference>
<comment type="function">
    <text evidence="3">E2 conjugating enzyme that associates with the E3 ubiquitin-protein ligase EL5 to mediate ubiquitination of target proteins.</text>
</comment>
<comment type="catalytic activity">
    <reaction evidence="1 2">
        <text>S-ubiquitinyl-[E1 ubiquitin-activating enzyme]-L-cysteine + [E2 ubiquitin-conjugating enzyme]-L-cysteine = [E1 ubiquitin-activating enzyme]-L-cysteine + S-ubiquitinyl-[E2 ubiquitin-conjugating enzyme]-L-cysteine.</text>
        <dbReference type="EC" id="2.3.2.23"/>
    </reaction>
</comment>
<comment type="pathway">
    <text evidence="1">Protein modification; protein ubiquitination.</text>
</comment>
<comment type="induction">
    <text evidence="3">By N-acetylchitooligosaccharide elicitor.</text>
</comment>
<comment type="similarity">
    <text evidence="1">Belongs to the ubiquitin-conjugating enzyme family.</text>
</comment>
<protein>
    <recommendedName>
        <fullName>Ubiquitin-conjugating enzyme E2 5B</fullName>
        <ecNumber>2.3.2.23</ecNumber>
    </recommendedName>
    <alternativeName>
        <fullName>E2 ubiquitin-conjugating enzyme 5B</fullName>
    </alternativeName>
    <alternativeName>
        <fullName>Ubiquitin carrier protein 5b</fullName>
        <shortName>OsUBC5b</shortName>
    </alternativeName>
    <alternativeName>
        <fullName>Ubiquitin-protein ligase 5B</fullName>
    </alternativeName>
</protein>
<name>UBC5B_ORYSJ</name>
<reference key="1">
    <citation type="journal article" date="2002" name="Plant J.">
        <title>EL5, a rice N-acetylchitooligosaccharide elicitor-responsive RING-H2 finger protein, is a ubiquitin ligase which functions in vitro in co-operation with an elicitor-responsive ubiquitin-conjugating enzyme, OsUBC5b.</title>
        <authorList>
            <person name="Takai R."/>
            <person name="Matsuda N."/>
            <person name="Nakano A."/>
            <person name="Hasegawa K."/>
            <person name="Akimoto C."/>
            <person name="Shibuya N."/>
            <person name="Minami E."/>
        </authorList>
    </citation>
    <scope>NUCLEOTIDE SEQUENCE [MRNA]</scope>
    <scope>FUNCTION</scope>
    <scope>INDUCTION</scope>
    <source>
        <strain>cv. Nipponbare</strain>
    </source>
</reference>
<reference key="2">
    <citation type="journal article" date="2005" name="Nature">
        <title>The map-based sequence of the rice genome.</title>
        <authorList>
            <consortium name="International rice genome sequencing project (IRGSP)"/>
        </authorList>
    </citation>
    <scope>NUCLEOTIDE SEQUENCE [LARGE SCALE GENOMIC DNA]</scope>
    <source>
        <strain>cv. Nipponbare</strain>
    </source>
</reference>
<reference key="3">
    <citation type="journal article" date="2008" name="Nucleic Acids Res.">
        <title>The rice annotation project database (RAP-DB): 2008 update.</title>
        <authorList>
            <consortium name="The rice annotation project (RAP)"/>
        </authorList>
    </citation>
    <scope>GENOME REANNOTATION</scope>
    <source>
        <strain>cv. Nipponbare</strain>
    </source>
</reference>
<reference key="4">
    <citation type="journal article" date="2013" name="Rice">
        <title>Improvement of the Oryza sativa Nipponbare reference genome using next generation sequence and optical map data.</title>
        <authorList>
            <person name="Kawahara Y."/>
            <person name="de la Bastide M."/>
            <person name="Hamilton J.P."/>
            <person name="Kanamori H."/>
            <person name="McCombie W.R."/>
            <person name="Ouyang S."/>
            <person name="Schwartz D.C."/>
            <person name="Tanaka T."/>
            <person name="Wu J."/>
            <person name="Zhou S."/>
            <person name="Childs K.L."/>
            <person name="Davidson R.M."/>
            <person name="Lin H."/>
            <person name="Quesada-Ocampo L."/>
            <person name="Vaillancourt B."/>
            <person name="Sakai H."/>
            <person name="Lee S.S."/>
            <person name="Kim J."/>
            <person name="Numa H."/>
            <person name="Itoh T."/>
            <person name="Buell C.R."/>
            <person name="Matsumoto T."/>
        </authorList>
    </citation>
    <scope>GENOME REANNOTATION</scope>
    <source>
        <strain>cv. Nipponbare</strain>
    </source>
</reference>
<reference key="5">
    <citation type="journal article" date="2005" name="PLoS Biol.">
        <title>The genomes of Oryza sativa: a history of duplications.</title>
        <authorList>
            <person name="Yu J."/>
            <person name="Wang J."/>
            <person name="Lin W."/>
            <person name="Li S."/>
            <person name="Li H."/>
            <person name="Zhou J."/>
            <person name="Ni P."/>
            <person name="Dong W."/>
            <person name="Hu S."/>
            <person name="Zeng C."/>
            <person name="Zhang J."/>
            <person name="Zhang Y."/>
            <person name="Li R."/>
            <person name="Xu Z."/>
            <person name="Li S."/>
            <person name="Li X."/>
            <person name="Zheng H."/>
            <person name="Cong L."/>
            <person name="Lin L."/>
            <person name="Yin J."/>
            <person name="Geng J."/>
            <person name="Li G."/>
            <person name="Shi J."/>
            <person name="Liu J."/>
            <person name="Lv H."/>
            <person name="Li J."/>
            <person name="Wang J."/>
            <person name="Deng Y."/>
            <person name="Ran L."/>
            <person name="Shi X."/>
            <person name="Wang X."/>
            <person name="Wu Q."/>
            <person name="Li C."/>
            <person name="Ren X."/>
            <person name="Wang J."/>
            <person name="Wang X."/>
            <person name="Li D."/>
            <person name="Liu D."/>
            <person name="Zhang X."/>
            <person name="Ji Z."/>
            <person name="Zhao W."/>
            <person name="Sun Y."/>
            <person name="Zhang Z."/>
            <person name="Bao J."/>
            <person name="Han Y."/>
            <person name="Dong L."/>
            <person name="Ji J."/>
            <person name="Chen P."/>
            <person name="Wu S."/>
            <person name="Liu J."/>
            <person name="Xiao Y."/>
            <person name="Bu D."/>
            <person name="Tan J."/>
            <person name="Yang L."/>
            <person name="Ye C."/>
            <person name="Zhang J."/>
            <person name="Xu J."/>
            <person name="Zhou Y."/>
            <person name="Yu Y."/>
            <person name="Zhang B."/>
            <person name="Zhuang S."/>
            <person name="Wei H."/>
            <person name="Liu B."/>
            <person name="Lei M."/>
            <person name="Yu H."/>
            <person name="Li Y."/>
            <person name="Xu H."/>
            <person name="Wei S."/>
            <person name="He X."/>
            <person name="Fang L."/>
            <person name="Zhang Z."/>
            <person name="Zhang Y."/>
            <person name="Huang X."/>
            <person name="Su Z."/>
            <person name="Tong W."/>
            <person name="Li J."/>
            <person name="Tong Z."/>
            <person name="Li S."/>
            <person name="Ye J."/>
            <person name="Wang L."/>
            <person name="Fang L."/>
            <person name="Lei T."/>
            <person name="Chen C.-S."/>
            <person name="Chen H.-C."/>
            <person name="Xu Z."/>
            <person name="Li H."/>
            <person name="Huang H."/>
            <person name="Zhang F."/>
            <person name="Xu H."/>
            <person name="Li N."/>
            <person name="Zhao C."/>
            <person name="Li S."/>
            <person name="Dong L."/>
            <person name="Huang Y."/>
            <person name="Li L."/>
            <person name="Xi Y."/>
            <person name="Qi Q."/>
            <person name="Li W."/>
            <person name="Zhang B."/>
            <person name="Hu W."/>
            <person name="Zhang Y."/>
            <person name="Tian X."/>
            <person name="Jiao Y."/>
            <person name="Liang X."/>
            <person name="Jin J."/>
            <person name="Gao L."/>
            <person name="Zheng W."/>
            <person name="Hao B."/>
            <person name="Liu S.-M."/>
            <person name="Wang W."/>
            <person name="Yuan L."/>
            <person name="Cao M."/>
            <person name="McDermott J."/>
            <person name="Samudrala R."/>
            <person name="Wang J."/>
            <person name="Wong G.K.-S."/>
            <person name="Yang H."/>
        </authorList>
    </citation>
    <scope>NUCLEOTIDE SEQUENCE [LARGE SCALE GENOMIC DNA]</scope>
    <source>
        <strain>cv. Nipponbare</strain>
    </source>
</reference>
<reference key="6">
    <citation type="journal article" date="2003" name="Science">
        <title>Collection, mapping, and annotation of over 28,000 cDNA clones from japonica rice.</title>
        <authorList>
            <consortium name="The rice full-length cDNA consortium"/>
        </authorList>
    </citation>
    <scope>NUCLEOTIDE SEQUENCE [LARGE SCALE MRNA]</scope>
    <source>
        <strain>cv. Nipponbare</strain>
    </source>
</reference>
<sequence length="148" mass="16446">MASKRILKELKDLQKDPPTSCSAGPVAEDMFHWQATLMGPSDSPYAGGVFLVTIHFPPDYPFKPPKVALKTKVFHPNINSNGSICLDILKEQWSPALTISKVLLSICSLLTDPNPDDPLVPEIAHMYKTDRAKYESTARSWTQKYAMG</sequence>